<feature type="chain" id="PRO_1000121545" description="Imidazolonepropionase">
    <location>
        <begin position="1"/>
        <end position="405"/>
    </location>
</feature>
<feature type="binding site" evidence="1">
    <location>
        <position position="72"/>
    </location>
    <ligand>
        <name>Fe(3+)</name>
        <dbReference type="ChEBI" id="CHEBI:29034"/>
    </ligand>
</feature>
<feature type="binding site" evidence="1">
    <location>
        <position position="72"/>
    </location>
    <ligand>
        <name>Zn(2+)</name>
        <dbReference type="ChEBI" id="CHEBI:29105"/>
    </ligand>
</feature>
<feature type="binding site" evidence="1">
    <location>
        <position position="74"/>
    </location>
    <ligand>
        <name>Fe(3+)</name>
        <dbReference type="ChEBI" id="CHEBI:29034"/>
    </ligand>
</feature>
<feature type="binding site" evidence="1">
    <location>
        <position position="74"/>
    </location>
    <ligand>
        <name>Zn(2+)</name>
        <dbReference type="ChEBI" id="CHEBI:29105"/>
    </ligand>
</feature>
<feature type="binding site" evidence="1">
    <location>
        <position position="81"/>
    </location>
    <ligand>
        <name>4-imidazolone-5-propanoate</name>
        <dbReference type="ChEBI" id="CHEBI:77893"/>
    </ligand>
</feature>
<feature type="binding site" evidence="1">
    <location>
        <position position="144"/>
    </location>
    <ligand>
        <name>4-imidazolone-5-propanoate</name>
        <dbReference type="ChEBI" id="CHEBI:77893"/>
    </ligand>
</feature>
<feature type="binding site" evidence="1">
    <location>
        <position position="144"/>
    </location>
    <ligand>
        <name>N-formimidoyl-L-glutamate</name>
        <dbReference type="ChEBI" id="CHEBI:58928"/>
    </ligand>
</feature>
<feature type="binding site" evidence="1">
    <location>
        <position position="177"/>
    </location>
    <ligand>
        <name>4-imidazolone-5-propanoate</name>
        <dbReference type="ChEBI" id="CHEBI:77893"/>
    </ligand>
</feature>
<feature type="binding site" evidence="1">
    <location>
        <position position="242"/>
    </location>
    <ligand>
        <name>Fe(3+)</name>
        <dbReference type="ChEBI" id="CHEBI:29034"/>
    </ligand>
</feature>
<feature type="binding site" evidence="1">
    <location>
        <position position="242"/>
    </location>
    <ligand>
        <name>Zn(2+)</name>
        <dbReference type="ChEBI" id="CHEBI:29105"/>
    </ligand>
</feature>
<feature type="binding site" evidence="1">
    <location>
        <position position="245"/>
    </location>
    <ligand>
        <name>4-imidazolone-5-propanoate</name>
        <dbReference type="ChEBI" id="CHEBI:77893"/>
    </ligand>
</feature>
<feature type="binding site" evidence="1">
    <location>
        <position position="317"/>
    </location>
    <ligand>
        <name>Fe(3+)</name>
        <dbReference type="ChEBI" id="CHEBI:29034"/>
    </ligand>
</feature>
<feature type="binding site" evidence="1">
    <location>
        <position position="317"/>
    </location>
    <ligand>
        <name>Zn(2+)</name>
        <dbReference type="ChEBI" id="CHEBI:29105"/>
    </ligand>
</feature>
<feature type="binding site" evidence="1">
    <location>
        <position position="319"/>
    </location>
    <ligand>
        <name>N-formimidoyl-L-glutamate</name>
        <dbReference type="ChEBI" id="CHEBI:58928"/>
    </ligand>
</feature>
<feature type="binding site" evidence="1">
    <location>
        <position position="321"/>
    </location>
    <ligand>
        <name>N-formimidoyl-L-glutamate</name>
        <dbReference type="ChEBI" id="CHEBI:58928"/>
    </ligand>
</feature>
<feature type="binding site" evidence="1">
    <location>
        <position position="322"/>
    </location>
    <ligand>
        <name>4-imidazolone-5-propanoate</name>
        <dbReference type="ChEBI" id="CHEBI:77893"/>
    </ligand>
</feature>
<comment type="function">
    <text evidence="1">Catalyzes the hydrolytic cleavage of the carbon-nitrogen bond in imidazolone-5-propanoate to yield N-formimidoyl-L-glutamate. It is the third step in the universal histidine degradation pathway.</text>
</comment>
<comment type="catalytic activity">
    <reaction evidence="1">
        <text>4-imidazolone-5-propanoate + H2O = N-formimidoyl-L-glutamate</text>
        <dbReference type="Rhea" id="RHEA:23660"/>
        <dbReference type="ChEBI" id="CHEBI:15377"/>
        <dbReference type="ChEBI" id="CHEBI:58928"/>
        <dbReference type="ChEBI" id="CHEBI:77893"/>
        <dbReference type="EC" id="3.5.2.7"/>
    </reaction>
</comment>
<comment type="cofactor">
    <cofactor evidence="1">
        <name>Zn(2+)</name>
        <dbReference type="ChEBI" id="CHEBI:29105"/>
    </cofactor>
    <cofactor evidence="1">
        <name>Fe(3+)</name>
        <dbReference type="ChEBI" id="CHEBI:29034"/>
    </cofactor>
    <text evidence="1">Binds 1 zinc or iron ion per subunit.</text>
</comment>
<comment type="pathway">
    <text evidence="1">Amino-acid degradation; L-histidine degradation into L-glutamate; N-formimidoyl-L-glutamate from L-histidine: step 3/3.</text>
</comment>
<comment type="subcellular location">
    <subcellularLocation>
        <location evidence="1">Cytoplasm</location>
    </subcellularLocation>
</comment>
<comment type="similarity">
    <text evidence="1">Belongs to the metallo-dependent hydrolases superfamily. HutI family.</text>
</comment>
<organism>
    <name type="scientific">Klebsiella pneumoniae (strain 342)</name>
    <dbReference type="NCBI Taxonomy" id="507522"/>
    <lineage>
        <taxon>Bacteria</taxon>
        <taxon>Pseudomonadati</taxon>
        <taxon>Pseudomonadota</taxon>
        <taxon>Gammaproteobacteria</taxon>
        <taxon>Enterobacterales</taxon>
        <taxon>Enterobacteriaceae</taxon>
        <taxon>Klebsiella/Raoultella group</taxon>
        <taxon>Klebsiella</taxon>
        <taxon>Klebsiella pneumoniae complex</taxon>
    </lineage>
</organism>
<accession>B5XZ83</accession>
<sequence length="405" mass="44175">MTQATSERVIWRNARLATLNPDYSQPYGLLERHALLVRNGRIEAIVADADAPGGRSIDLEGRLVTPGLIDCHTHLIFGGSRAQEWEQRLNGVSYQTISANGGGINSTVRATRDSSEAELLALAQPRLARLLREGVTTLEIKSGYGLDLQNERKMLRVARQLADDNGVELSATLLSAHATPPEYHGDADGYISLVCETILPTLWQEGLFESVDVFCENVGFSPQQTERVFQAAQALGIPVKGHVEQLSSLGGAQLVSRYHGLSADHIEYLTEEGVAAMRESGTVAALLPGAFYFLNETRKPPVELLRKYQVPMAVATDFNPGTSPFASLHLAMNMACVKFGLTPEEAWAGVTRHAARALGRQDSHGQLAAGFVANFAIWDAEHPVEMVYEPGRAPLWGRVVRGERQ</sequence>
<dbReference type="EC" id="3.5.2.7" evidence="1"/>
<dbReference type="EMBL" id="CP000964">
    <property type="protein sequence ID" value="ACI09312.1"/>
    <property type="molecule type" value="Genomic_DNA"/>
</dbReference>
<dbReference type="SMR" id="B5XZ83"/>
<dbReference type="KEGG" id="kpe:KPK_3781"/>
<dbReference type="HOGENOM" id="CLU_041647_0_0_6"/>
<dbReference type="UniPathway" id="UPA00379">
    <property type="reaction ID" value="UER00551"/>
</dbReference>
<dbReference type="Proteomes" id="UP000001734">
    <property type="component" value="Chromosome"/>
</dbReference>
<dbReference type="GO" id="GO:0005737">
    <property type="term" value="C:cytoplasm"/>
    <property type="evidence" value="ECO:0007669"/>
    <property type="project" value="UniProtKB-SubCell"/>
</dbReference>
<dbReference type="GO" id="GO:0050480">
    <property type="term" value="F:imidazolonepropionase activity"/>
    <property type="evidence" value="ECO:0007669"/>
    <property type="project" value="UniProtKB-UniRule"/>
</dbReference>
<dbReference type="GO" id="GO:0005506">
    <property type="term" value="F:iron ion binding"/>
    <property type="evidence" value="ECO:0007669"/>
    <property type="project" value="UniProtKB-UniRule"/>
</dbReference>
<dbReference type="GO" id="GO:0008270">
    <property type="term" value="F:zinc ion binding"/>
    <property type="evidence" value="ECO:0007669"/>
    <property type="project" value="UniProtKB-UniRule"/>
</dbReference>
<dbReference type="GO" id="GO:0019556">
    <property type="term" value="P:L-histidine catabolic process to glutamate and formamide"/>
    <property type="evidence" value="ECO:0007669"/>
    <property type="project" value="UniProtKB-UniPathway"/>
</dbReference>
<dbReference type="GO" id="GO:0019557">
    <property type="term" value="P:L-histidine catabolic process to glutamate and formate"/>
    <property type="evidence" value="ECO:0007669"/>
    <property type="project" value="UniProtKB-UniPathway"/>
</dbReference>
<dbReference type="CDD" id="cd01296">
    <property type="entry name" value="Imidazolone-5PH"/>
    <property type="match status" value="1"/>
</dbReference>
<dbReference type="FunFam" id="3.20.20.140:FF:000007">
    <property type="entry name" value="Imidazolonepropionase"/>
    <property type="match status" value="1"/>
</dbReference>
<dbReference type="Gene3D" id="3.20.20.140">
    <property type="entry name" value="Metal-dependent hydrolases"/>
    <property type="match status" value="1"/>
</dbReference>
<dbReference type="Gene3D" id="2.30.40.10">
    <property type="entry name" value="Urease, subunit C, domain 1"/>
    <property type="match status" value="1"/>
</dbReference>
<dbReference type="HAMAP" id="MF_00372">
    <property type="entry name" value="HutI"/>
    <property type="match status" value="1"/>
</dbReference>
<dbReference type="InterPro" id="IPR006680">
    <property type="entry name" value="Amidohydro-rel"/>
</dbReference>
<dbReference type="InterPro" id="IPR005920">
    <property type="entry name" value="HutI"/>
</dbReference>
<dbReference type="InterPro" id="IPR011059">
    <property type="entry name" value="Metal-dep_hydrolase_composite"/>
</dbReference>
<dbReference type="InterPro" id="IPR032466">
    <property type="entry name" value="Metal_Hydrolase"/>
</dbReference>
<dbReference type="NCBIfam" id="TIGR01224">
    <property type="entry name" value="hutI"/>
    <property type="match status" value="1"/>
</dbReference>
<dbReference type="PANTHER" id="PTHR42752">
    <property type="entry name" value="IMIDAZOLONEPROPIONASE"/>
    <property type="match status" value="1"/>
</dbReference>
<dbReference type="PANTHER" id="PTHR42752:SF1">
    <property type="entry name" value="IMIDAZOLONEPROPIONASE-RELATED"/>
    <property type="match status" value="1"/>
</dbReference>
<dbReference type="Pfam" id="PF01979">
    <property type="entry name" value="Amidohydro_1"/>
    <property type="match status" value="1"/>
</dbReference>
<dbReference type="SUPFAM" id="SSF51338">
    <property type="entry name" value="Composite domain of metallo-dependent hydrolases"/>
    <property type="match status" value="1"/>
</dbReference>
<dbReference type="SUPFAM" id="SSF51556">
    <property type="entry name" value="Metallo-dependent hydrolases"/>
    <property type="match status" value="1"/>
</dbReference>
<proteinExistence type="inferred from homology"/>
<name>HUTI_KLEP3</name>
<protein>
    <recommendedName>
        <fullName evidence="1">Imidazolonepropionase</fullName>
        <ecNumber evidence="1">3.5.2.7</ecNumber>
    </recommendedName>
    <alternativeName>
        <fullName evidence="1">Imidazolone-5-propionate hydrolase</fullName>
    </alternativeName>
</protein>
<evidence type="ECO:0000255" key="1">
    <source>
        <dbReference type="HAMAP-Rule" id="MF_00372"/>
    </source>
</evidence>
<gene>
    <name evidence="1" type="primary">hutI</name>
    <name type="ordered locus">KPK_3781</name>
</gene>
<reference key="1">
    <citation type="journal article" date="2008" name="PLoS Genet.">
        <title>Complete genome sequence of the N2-fixing broad host range endophyte Klebsiella pneumoniae 342 and virulence predictions verified in mice.</title>
        <authorList>
            <person name="Fouts D.E."/>
            <person name="Tyler H.L."/>
            <person name="DeBoy R.T."/>
            <person name="Daugherty S."/>
            <person name="Ren Q."/>
            <person name="Badger J.H."/>
            <person name="Durkin A.S."/>
            <person name="Huot H."/>
            <person name="Shrivastava S."/>
            <person name="Kothari S."/>
            <person name="Dodson R.J."/>
            <person name="Mohamoud Y."/>
            <person name="Khouri H."/>
            <person name="Roesch L.F.W."/>
            <person name="Krogfelt K.A."/>
            <person name="Struve C."/>
            <person name="Triplett E.W."/>
            <person name="Methe B.A."/>
        </authorList>
    </citation>
    <scope>NUCLEOTIDE SEQUENCE [LARGE SCALE GENOMIC DNA]</scope>
    <source>
        <strain>342</strain>
    </source>
</reference>
<keyword id="KW-0963">Cytoplasm</keyword>
<keyword id="KW-0369">Histidine metabolism</keyword>
<keyword id="KW-0378">Hydrolase</keyword>
<keyword id="KW-0408">Iron</keyword>
<keyword id="KW-0479">Metal-binding</keyword>
<keyword id="KW-0862">Zinc</keyword>